<keyword id="KW-0998">Cell outer membrane</keyword>
<keyword id="KW-0406">Ion transport</keyword>
<keyword id="KW-0472">Membrane</keyword>
<keyword id="KW-0626">Porin</keyword>
<keyword id="KW-1185">Reference proteome</keyword>
<keyword id="KW-0732">Signal</keyword>
<keyword id="KW-0812">Transmembrane</keyword>
<keyword id="KW-1134">Transmembrane beta strand</keyword>
<keyword id="KW-0813">Transport</keyword>
<protein>
    <recommendedName>
        <fullName>Porin Omp2b</fullName>
    </recommendedName>
</protein>
<accession>A9MA15</accession>
<name>OMP2B_BRUC2</name>
<proteinExistence type="inferred from homology"/>
<reference key="1">
    <citation type="submission" date="2007-10" db="EMBL/GenBank/DDBJ databases">
        <title>Brucella canis ATCC 23365 whole genome shotgun sequencing project.</title>
        <authorList>
            <person name="Setubal J.C."/>
            <person name="Bowns C."/>
            <person name="Boyle S."/>
            <person name="Crasta O.R."/>
            <person name="Czar M.J."/>
            <person name="Dharmanolla C."/>
            <person name="Gillespie J.J."/>
            <person name="Kenyon R.W."/>
            <person name="Lu J."/>
            <person name="Mane S."/>
            <person name="Mohapatra S."/>
            <person name="Nagrani S."/>
            <person name="Purkayastha A."/>
            <person name="Rajasimha H.K."/>
            <person name="Shallom J.M."/>
            <person name="Shallom S."/>
            <person name="Shukla M."/>
            <person name="Snyder E.E."/>
            <person name="Sobral B.W."/>
            <person name="Wattam A.R."/>
            <person name="Will R."/>
            <person name="Williams K."/>
            <person name="Yoo H."/>
            <person name="Bruce D."/>
            <person name="Detter C."/>
            <person name="Munk C."/>
            <person name="Brettin T.S."/>
        </authorList>
    </citation>
    <scope>NUCLEOTIDE SEQUENCE [LARGE SCALE GENOMIC DNA]</scope>
    <source>
        <strain>ATCC 23365 / NCTC 10854 / RM-666</strain>
    </source>
</reference>
<dbReference type="EMBL" id="CP000872">
    <property type="protein sequence ID" value="ABX61727.1"/>
    <property type="status" value="ALT_INIT"/>
    <property type="molecule type" value="Genomic_DNA"/>
</dbReference>
<dbReference type="RefSeq" id="WP_006132439.1">
    <property type="nucleotide sequence ID" value="NC_010103.1"/>
</dbReference>
<dbReference type="SMR" id="A9MA15"/>
<dbReference type="GeneID" id="55590368"/>
<dbReference type="KEGG" id="bcs:BCAN_A0653"/>
<dbReference type="HOGENOM" id="CLU_044836_0_0_5"/>
<dbReference type="PhylomeDB" id="A9MA15"/>
<dbReference type="Proteomes" id="UP000001385">
    <property type="component" value="Chromosome I"/>
</dbReference>
<dbReference type="GO" id="GO:0009279">
    <property type="term" value="C:cell outer membrane"/>
    <property type="evidence" value="ECO:0007669"/>
    <property type="project" value="UniProtKB-SubCell"/>
</dbReference>
<dbReference type="GO" id="GO:0046930">
    <property type="term" value="C:pore complex"/>
    <property type="evidence" value="ECO:0007669"/>
    <property type="project" value="UniProtKB-KW"/>
</dbReference>
<dbReference type="GO" id="GO:0015288">
    <property type="term" value="F:porin activity"/>
    <property type="evidence" value="ECO:0007669"/>
    <property type="project" value="UniProtKB-KW"/>
</dbReference>
<dbReference type="GO" id="GO:0006811">
    <property type="term" value="P:monoatomic ion transport"/>
    <property type="evidence" value="ECO:0007669"/>
    <property type="project" value="UniProtKB-KW"/>
</dbReference>
<dbReference type="InterPro" id="IPR003684">
    <property type="entry name" value="Porin_alphabac"/>
</dbReference>
<dbReference type="Pfam" id="PF02530">
    <property type="entry name" value="Porin_2"/>
    <property type="match status" value="1"/>
</dbReference>
<dbReference type="SUPFAM" id="SSF56935">
    <property type="entry name" value="Porins"/>
    <property type="match status" value="1"/>
</dbReference>
<organism>
    <name type="scientific">Brucella canis (strain ATCC 23365 / NCTC 10854 / RM-666)</name>
    <dbReference type="NCBI Taxonomy" id="483179"/>
    <lineage>
        <taxon>Bacteria</taxon>
        <taxon>Pseudomonadati</taxon>
        <taxon>Pseudomonadota</taxon>
        <taxon>Alphaproteobacteria</taxon>
        <taxon>Hyphomicrobiales</taxon>
        <taxon>Brucellaceae</taxon>
        <taxon>Brucella/Ochrobactrum group</taxon>
        <taxon>Brucella</taxon>
    </lineage>
</organism>
<gene>
    <name type="primary">omp2b</name>
    <name type="ordered locus">BCAN_A0653</name>
</gene>
<comment type="function">
    <text evidence="1">Forms passive diffusion pores that allow small molecular weight hydrophilic materials across the outer membrane.</text>
</comment>
<comment type="subunit">
    <text evidence="1">Homotrimer.</text>
</comment>
<comment type="subcellular location">
    <subcellularLocation>
        <location evidence="1">Cell outer membrane</location>
        <topology evidence="1">Multi-pass membrane protein</topology>
    </subcellularLocation>
</comment>
<comment type="domain">
    <text evidence="1">Consists of 16-stranded beta-barrel sheets, with large surface-exposed loops, that form a transmembrane pore at the center of each barrel. The pore is partially ocluded by a peptide loop that folds into the pore lumen.</text>
</comment>
<comment type="miscellaneous">
    <text evidence="1">The pore formed by Omp2a is larger than the one formed by Omp2b. Omp2b pores have optimal permeability to allow growth and protection against harmful compounds. The larger pore formed by Omp2a may be advantageous for intracellular growth, when the bacterium is competing with the host cell for nutrients whose concentration is particularly low within the phagosome.</text>
</comment>
<comment type="similarity">
    <text evidence="3">Belongs to the alphaproteobacteria porin family.</text>
</comment>
<comment type="sequence caution" evidence="3">
    <conflict type="erroneous initiation">
        <sequence resource="EMBL-CDS" id="ABX61727"/>
    </conflict>
</comment>
<evidence type="ECO:0000250" key="1">
    <source>
        <dbReference type="UniProtKB" id="Q44665"/>
    </source>
</evidence>
<evidence type="ECO:0000255" key="2"/>
<evidence type="ECO:0000305" key="3"/>
<sequence>MNIKSLLLGSAAALVAASGAQAADAIVAPEPEAVEYVRVCDAYGAGYFYIPGTETCLRVHGYVRYDVKGGDDVYTGSDRKGWDKSARFALRVSTGSETELGTLKTFTELRFNYAANNSGVDGKYGNETSSGTVMEFAYIQLGGLRVGIDESEFHTFTGYLGDVINDDVISAGSYRTGKISYTFTGGNGFSAVIALEQGGDNDGGYTGTTNYHIDGYMPDVVGGLKYAGGWGSIAGVVAYDSVIEEWAAKVRGDVNITDQFSVWLQGAYSSAATPDQNYGQWGGDWAVWGGLKYQATQKAAFNLQAAHDDWGKTAVTANVAYELVPGFTVTPEVSYTKFGGEWKNTVAEDNAWGGIVRFQRSF</sequence>
<feature type="signal peptide" evidence="2">
    <location>
        <begin position="1"/>
        <end position="22"/>
    </location>
</feature>
<feature type="chain" id="PRO_0000354010" description="Porin Omp2b">
    <location>
        <begin position="23"/>
        <end position="362"/>
    </location>
</feature>